<proteinExistence type="inferred from homology"/>
<feature type="chain" id="PRO_0000382707" description="Cytosolic Fe-S cluster assembly factor NUBP2 homolog">
    <location>
        <begin position="1"/>
        <end position="257"/>
    </location>
</feature>
<feature type="binding site" evidence="1">
    <location>
        <begin position="14"/>
        <end position="21"/>
    </location>
    <ligand>
        <name>ATP</name>
        <dbReference type="ChEBI" id="CHEBI:30616"/>
    </ligand>
</feature>
<feature type="binding site" evidence="1">
    <location>
        <position position="188"/>
    </location>
    <ligand>
        <name>[4Fe-4S] cluster</name>
        <dbReference type="ChEBI" id="CHEBI:49883"/>
        <note>ligand shared between dimeric partners</note>
    </ligand>
</feature>
<feature type="binding site" evidence="1">
    <location>
        <position position="191"/>
    </location>
    <ligand>
        <name>[4Fe-4S] cluster</name>
        <dbReference type="ChEBI" id="CHEBI:49883"/>
        <note>ligand shared between dimeric partners</note>
    </ligand>
</feature>
<reference key="1">
    <citation type="submission" date="2007-03" db="EMBL/GenBank/DDBJ databases">
        <title>Annotation of Culex pipiens quinquefasciatus.</title>
        <authorList>
            <consortium name="The Broad Institute Genome Sequencing Platform"/>
            <person name="Atkinson P.W."/>
            <person name="Hemingway J."/>
            <person name="Christensen B.M."/>
            <person name="Higgs S."/>
            <person name="Kodira C.D."/>
            <person name="Hannick L.I."/>
            <person name="Megy K."/>
            <person name="O'Leary S.B."/>
            <person name="Pearson M."/>
            <person name="Haas B.J."/>
            <person name="Mauceli E."/>
            <person name="Wortman J.R."/>
            <person name="Lee N.H."/>
            <person name="Guigo R."/>
            <person name="Stanke M."/>
            <person name="Alvarado L."/>
            <person name="Amedeo P."/>
            <person name="Antoine C.H."/>
            <person name="Arensburger P."/>
            <person name="Bidwell S.L."/>
            <person name="Crawford M."/>
            <person name="Camaro F."/>
            <person name="Devon K."/>
            <person name="Engels R."/>
            <person name="Hammond M."/>
            <person name="Howarth C."/>
            <person name="Koehrsen M."/>
            <person name="Lawson D."/>
            <person name="Montgomery P."/>
            <person name="Nene V."/>
            <person name="Nusbaum C."/>
            <person name="Puiu D."/>
            <person name="Romero-Severson J."/>
            <person name="Severson D.W."/>
            <person name="Shumway M."/>
            <person name="Sisk P."/>
            <person name="Stolte C."/>
            <person name="Zeng Q."/>
            <person name="Eisenstadt E."/>
            <person name="Fraser-Liggett C.M."/>
            <person name="Strausberg R."/>
            <person name="Galagan J."/>
            <person name="Birren B."/>
            <person name="Collins F.H."/>
        </authorList>
    </citation>
    <scope>NUCLEOTIDE SEQUENCE [LARGE SCALE GENOMIC DNA]</scope>
    <source>
        <strain>JHB</strain>
    </source>
</reference>
<evidence type="ECO:0000255" key="1">
    <source>
        <dbReference type="HAMAP-Rule" id="MF_03039"/>
    </source>
</evidence>
<protein>
    <recommendedName>
        <fullName evidence="1">Cytosolic Fe-S cluster assembly factor NUBP2 homolog</fullName>
    </recommendedName>
</protein>
<name>NUBP2_CULQU</name>
<dbReference type="EMBL" id="DS232762">
    <property type="protein sequence ID" value="EDS45498.1"/>
    <property type="molecule type" value="Genomic_DNA"/>
</dbReference>
<dbReference type="RefSeq" id="XP_001867712.1">
    <property type="nucleotide sequence ID" value="XM_001867677.1"/>
</dbReference>
<dbReference type="SMR" id="B0XDJ0"/>
<dbReference type="FunCoup" id="B0XDJ0">
    <property type="interactions" value="251"/>
</dbReference>
<dbReference type="STRING" id="7176.B0XDJ0"/>
<dbReference type="EnsemblMetazoa" id="CPIJ017390-RA">
    <property type="protein sequence ID" value="CPIJ017390-PA"/>
    <property type="gene ID" value="CPIJ017390"/>
</dbReference>
<dbReference type="KEGG" id="cqu:CpipJ_CPIJ017390"/>
<dbReference type="CTD" id="10101"/>
<dbReference type="VEuPathDB" id="VectorBase:CPIJ017390"/>
<dbReference type="VEuPathDB" id="VectorBase:CQUJHB003130"/>
<dbReference type="eggNOG" id="KOG3022">
    <property type="taxonomic scope" value="Eukaryota"/>
</dbReference>
<dbReference type="HOGENOM" id="CLU_024839_0_1_1"/>
<dbReference type="InParanoid" id="B0XDJ0"/>
<dbReference type="OMA" id="WIPVFAD"/>
<dbReference type="OrthoDB" id="1741334at2759"/>
<dbReference type="PhylomeDB" id="B0XDJ0"/>
<dbReference type="Proteomes" id="UP000002320">
    <property type="component" value="Unassembled WGS sequence"/>
</dbReference>
<dbReference type="GO" id="GO:0005829">
    <property type="term" value="C:cytosol"/>
    <property type="evidence" value="ECO:0007669"/>
    <property type="project" value="TreeGrafter"/>
</dbReference>
<dbReference type="GO" id="GO:0051539">
    <property type="term" value="F:4 iron, 4 sulfur cluster binding"/>
    <property type="evidence" value="ECO:0007669"/>
    <property type="project" value="UniProtKB-UniRule"/>
</dbReference>
<dbReference type="GO" id="GO:0005524">
    <property type="term" value="F:ATP binding"/>
    <property type="evidence" value="ECO:0007669"/>
    <property type="project" value="UniProtKB-KW"/>
</dbReference>
<dbReference type="GO" id="GO:0140663">
    <property type="term" value="F:ATP-dependent FeS chaperone activity"/>
    <property type="evidence" value="ECO:0007669"/>
    <property type="project" value="InterPro"/>
</dbReference>
<dbReference type="GO" id="GO:0046872">
    <property type="term" value="F:metal ion binding"/>
    <property type="evidence" value="ECO:0007669"/>
    <property type="project" value="UniProtKB-KW"/>
</dbReference>
<dbReference type="GO" id="GO:0016226">
    <property type="term" value="P:iron-sulfur cluster assembly"/>
    <property type="evidence" value="ECO:0007669"/>
    <property type="project" value="UniProtKB-UniRule"/>
</dbReference>
<dbReference type="CDD" id="cd02037">
    <property type="entry name" value="Mrp_NBP35"/>
    <property type="match status" value="1"/>
</dbReference>
<dbReference type="FunFam" id="3.40.50.300:FF:000796">
    <property type="entry name" value="Cytosolic Fe-S cluster assembly factor NUBP2"/>
    <property type="match status" value="1"/>
</dbReference>
<dbReference type="Gene3D" id="3.40.50.300">
    <property type="entry name" value="P-loop containing nucleotide triphosphate hydrolases"/>
    <property type="match status" value="1"/>
</dbReference>
<dbReference type="HAMAP" id="MF_02040">
    <property type="entry name" value="Mrp_NBP35"/>
    <property type="match status" value="1"/>
</dbReference>
<dbReference type="HAMAP" id="MF_03039">
    <property type="entry name" value="NUBP2"/>
    <property type="match status" value="1"/>
</dbReference>
<dbReference type="InterPro" id="IPR000808">
    <property type="entry name" value="Mrp-like_CS"/>
</dbReference>
<dbReference type="InterPro" id="IPR019591">
    <property type="entry name" value="Mrp/NBP35_ATP-bd"/>
</dbReference>
<dbReference type="InterPro" id="IPR028600">
    <property type="entry name" value="NUBP2/Cfd1_eukaryotes"/>
</dbReference>
<dbReference type="InterPro" id="IPR027417">
    <property type="entry name" value="P-loop_NTPase"/>
</dbReference>
<dbReference type="InterPro" id="IPR033756">
    <property type="entry name" value="YlxH/NBP35"/>
</dbReference>
<dbReference type="PANTHER" id="PTHR23264:SF19">
    <property type="entry name" value="CYTOSOLIC FE-S CLUSTER ASSEMBLY FACTOR NUBP2"/>
    <property type="match status" value="1"/>
</dbReference>
<dbReference type="PANTHER" id="PTHR23264">
    <property type="entry name" value="NUCLEOTIDE-BINDING PROTEIN NBP35 YEAST -RELATED"/>
    <property type="match status" value="1"/>
</dbReference>
<dbReference type="Pfam" id="PF10609">
    <property type="entry name" value="ParA"/>
    <property type="match status" value="1"/>
</dbReference>
<dbReference type="SUPFAM" id="SSF52540">
    <property type="entry name" value="P-loop containing nucleoside triphosphate hydrolases"/>
    <property type="match status" value="1"/>
</dbReference>
<dbReference type="PROSITE" id="PS01215">
    <property type="entry name" value="MRP"/>
    <property type="match status" value="1"/>
</dbReference>
<gene>
    <name type="ORF">CPIJ017390</name>
</gene>
<organism>
    <name type="scientific">Culex quinquefasciatus</name>
    <name type="common">Southern house mosquito</name>
    <name type="synonym">Culex pungens</name>
    <dbReference type="NCBI Taxonomy" id="7176"/>
    <lineage>
        <taxon>Eukaryota</taxon>
        <taxon>Metazoa</taxon>
        <taxon>Ecdysozoa</taxon>
        <taxon>Arthropoda</taxon>
        <taxon>Hexapoda</taxon>
        <taxon>Insecta</taxon>
        <taxon>Pterygota</taxon>
        <taxon>Neoptera</taxon>
        <taxon>Endopterygota</taxon>
        <taxon>Diptera</taxon>
        <taxon>Nematocera</taxon>
        <taxon>Culicoidea</taxon>
        <taxon>Culicidae</taxon>
        <taxon>Culicinae</taxon>
        <taxon>Culicini</taxon>
        <taxon>Culex</taxon>
        <taxon>Culex</taxon>
    </lineage>
</organism>
<accession>B0XDJ0</accession>
<sequence length="257" mass="27177">MLDKIKHIILVLSGKGGVGKSTVSTQLALTLAESGHKVGLLDIDLCGPSVPFLLGLEGHDVHQCEQGWVPVFSGADQRLAVMSIGFLLKNRDEAVIWRGPKKTAMIKQFLEDVAWDELDYLVIDTPPGTSDEHITVMECLKGVNADGAIIVTTPQEMALEDVRKEVTFCKKTGIAILGIVENMSGFVCPNCAECTKIFSSGGGVALAELAQVPHLGTLPIDPRVGALAGTGKACVTELPDCTTSLVLKSIAKSIGAE</sequence>
<comment type="function">
    <text evidence="1">Component of the cytosolic iron-sulfur (Fe/S) protein assembly (CIA) machinery. Required for maturation of extramitochondrial Fe-S proteins. The NUBP1-NUBP2 heterotetramer forms a Fe-S scaffold complex, mediating the de novo assembly of an Fe-S cluster and its transfer to target apoproteins.</text>
</comment>
<comment type="cofactor">
    <cofactor evidence="1">
        <name>[4Fe-4S] cluster</name>
        <dbReference type="ChEBI" id="CHEBI:49883"/>
    </cofactor>
    <text evidence="1">Binds 4 [4Fe-4S] clusters per heterotetramer. Contains two stable clusters in the N-termini of NUBP1 and two labile, bridging clusters between subunits of the NUBP1-NUBP2 heterotetramer.</text>
</comment>
<comment type="subunit">
    <text evidence="1">Heterotetramer of 2 NUBP1 and 2 NUBP2 chains.</text>
</comment>
<comment type="subcellular location">
    <subcellularLocation>
        <location evidence="1">Cytoplasm</location>
    </subcellularLocation>
</comment>
<comment type="similarity">
    <text evidence="1">Belongs to the Mrp/NBP35 ATP-binding proteins family. NUBP2/CFD1 subfamily.</text>
</comment>
<keyword id="KW-0004">4Fe-4S</keyword>
<keyword id="KW-0067">ATP-binding</keyword>
<keyword id="KW-0963">Cytoplasm</keyword>
<keyword id="KW-0408">Iron</keyword>
<keyword id="KW-0411">Iron-sulfur</keyword>
<keyword id="KW-0479">Metal-binding</keyword>
<keyword id="KW-0547">Nucleotide-binding</keyword>
<keyword id="KW-1185">Reference proteome</keyword>